<name>JSPR1_BOVIN</name>
<protein>
    <recommendedName>
        <fullName>Junctional sarcoplasmic reticulum protein 1</fullName>
    </recommendedName>
</protein>
<comment type="function">
    <text evidence="1">Involved in skeletal muscle excitation/contraction coupling (EC), probably acting as a regulator of the voltage-sensitive calcium channel CACNA1S (By similarity). EC is a physiological process whereby an electrical signal (depolarization of the plasma membrane) is converted into a chemical signal, a calcium gradient, by the opening of ryanodine receptor calcium release channels. May regulate CACNA1S membrane targeting and activity.</text>
</comment>
<comment type="subunit">
    <text evidence="1">Interacts with CACNA1S, CACNB1 and calsequestrin.</text>
</comment>
<comment type="subcellular location">
    <subcellularLocation>
        <location evidence="1">Sarcoplasmic reticulum membrane</location>
    </subcellularLocation>
    <subcellularLocation>
        <location evidence="1">Endoplasmic reticulum membrane</location>
    </subcellularLocation>
    <text evidence="1">Colocalizes with ryanodine receptors at the sarcoplasmic reticulum triad membranes.</text>
</comment>
<dbReference type="EMBL" id="BC110244">
    <property type="protein sequence ID" value="AAI10245.1"/>
    <property type="molecule type" value="mRNA"/>
</dbReference>
<dbReference type="RefSeq" id="NP_001039496.1">
    <property type="nucleotide sequence ID" value="NM_001046031.2"/>
</dbReference>
<dbReference type="FunCoup" id="Q2YDF7">
    <property type="interactions" value="68"/>
</dbReference>
<dbReference type="STRING" id="9913.ENSBTAP00000019913"/>
<dbReference type="PaxDb" id="9913-ENSBTAP00000019913"/>
<dbReference type="GeneID" id="509378"/>
<dbReference type="KEGG" id="bta:509378"/>
<dbReference type="CTD" id="126306"/>
<dbReference type="eggNOG" id="ENOG502S4JK">
    <property type="taxonomic scope" value="Eukaryota"/>
</dbReference>
<dbReference type="InParanoid" id="Q2YDF7"/>
<dbReference type="OrthoDB" id="9838378at2759"/>
<dbReference type="Proteomes" id="UP000009136">
    <property type="component" value="Unplaced"/>
</dbReference>
<dbReference type="GO" id="GO:0016529">
    <property type="term" value="C:sarcoplasmic reticulum"/>
    <property type="evidence" value="ECO:0000318"/>
    <property type="project" value="GO_Central"/>
</dbReference>
<dbReference type="GO" id="GO:0033017">
    <property type="term" value="C:sarcoplasmic reticulum membrane"/>
    <property type="evidence" value="ECO:0007669"/>
    <property type="project" value="UniProtKB-SubCell"/>
</dbReference>
<dbReference type="GO" id="GO:0003009">
    <property type="term" value="P:skeletal muscle contraction"/>
    <property type="evidence" value="ECO:0000250"/>
    <property type="project" value="UniProtKB"/>
</dbReference>
<dbReference type="InterPro" id="IPR026178">
    <property type="entry name" value="JSRP1"/>
</dbReference>
<dbReference type="PANTHER" id="PTHR22397">
    <property type="entry name" value="JUNCTIONAL SARCOPLASMIC RETICULUM PROTEIN 1"/>
    <property type="match status" value="1"/>
</dbReference>
<dbReference type="PANTHER" id="PTHR22397:SF2">
    <property type="entry name" value="JUNCTIONAL SARCOPLASMIC RETICULUM PROTEIN 1"/>
    <property type="match status" value="1"/>
</dbReference>
<dbReference type="Pfam" id="PF15312">
    <property type="entry name" value="JSRP"/>
    <property type="match status" value="1"/>
</dbReference>
<feature type="chain" id="PRO_0000314024" description="Junctional sarcoplasmic reticulum protein 1">
    <location>
        <begin position="1"/>
        <end position="337"/>
    </location>
</feature>
<feature type="region of interest" description="Mediates interaction with CACNA1S" evidence="1">
    <location>
        <begin position="1"/>
        <end position="84"/>
    </location>
</feature>
<feature type="region of interest" description="Disordered" evidence="2">
    <location>
        <begin position="23"/>
        <end position="125"/>
    </location>
</feature>
<feature type="region of interest" description="Disordered" evidence="2">
    <location>
        <begin position="159"/>
        <end position="337"/>
    </location>
</feature>
<feature type="compositionally biased region" description="Basic and acidic residues" evidence="2">
    <location>
        <begin position="49"/>
        <end position="59"/>
    </location>
</feature>
<feature type="compositionally biased region" description="Basic and acidic residues" evidence="2">
    <location>
        <begin position="69"/>
        <end position="79"/>
    </location>
</feature>
<feature type="compositionally biased region" description="Low complexity" evidence="2">
    <location>
        <begin position="165"/>
        <end position="180"/>
    </location>
</feature>
<feature type="compositionally biased region" description="Basic and acidic residues" evidence="2">
    <location>
        <begin position="199"/>
        <end position="213"/>
    </location>
</feature>
<feature type="compositionally biased region" description="Acidic residues" evidence="2">
    <location>
        <begin position="214"/>
        <end position="225"/>
    </location>
</feature>
<feature type="compositionally biased region" description="Basic and acidic residues" evidence="2">
    <location>
        <begin position="236"/>
        <end position="277"/>
    </location>
</feature>
<feature type="compositionally biased region" description="Basic and acidic residues" evidence="2">
    <location>
        <begin position="285"/>
        <end position="309"/>
    </location>
</feature>
<feature type="compositionally biased region" description="Basic and acidic residues" evidence="2">
    <location>
        <begin position="316"/>
        <end position="325"/>
    </location>
</feature>
<feature type="compositionally biased region" description="Basic residues" evidence="2">
    <location>
        <begin position="326"/>
        <end position="337"/>
    </location>
</feature>
<evidence type="ECO:0000250" key="1"/>
<evidence type="ECO:0000256" key="2">
    <source>
        <dbReference type="SAM" id="MobiDB-lite"/>
    </source>
</evidence>
<organism>
    <name type="scientific">Bos taurus</name>
    <name type="common">Bovine</name>
    <dbReference type="NCBI Taxonomy" id="9913"/>
    <lineage>
        <taxon>Eukaryota</taxon>
        <taxon>Metazoa</taxon>
        <taxon>Chordata</taxon>
        <taxon>Craniata</taxon>
        <taxon>Vertebrata</taxon>
        <taxon>Euteleostomi</taxon>
        <taxon>Mammalia</taxon>
        <taxon>Eutheria</taxon>
        <taxon>Laurasiatheria</taxon>
        <taxon>Artiodactyla</taxon>
        <taxon>Ruminantia</taxon>
        <taxon>Pecora</taxon>
        <taxon>Bovidae</taxon>
        <taxon>Bovinae</taxon>
        <taxon>Bos</taxon>
    </lineage>
</organism>
<accession>Q2YDF7</accession>
<sequence length="337" mass="36954">MATRAMEELDGGLGSCQVDEDLSALADPCPSRPQEDSVRATSRLADSSSRSHDSQERVTEGSPTGSVDTKPKKMEKEPVSKVTSGAGKEKLKAGATPRSPARKKAQTASPTQPPPPPALSDELPWGDLTLNKCLVLASLVALLGSAFQLCREAVARDVEAPAPVPESWASSSSSPKGPASTLPKPEAWAPSVRQPEPPSKLEERVQIPRSEEAAEKDEWESEEAADGEHVPLAGRGPKEKLKKEKPRKERPGKEKPQKEERPRKEKPRKEEKPRGAREPQGALPRRWEAREGGHRPWGRDSGAPEDRKRQAWVSLRRPDEEDRPLGRQKRRAGKGRD</sequence>
<proteinExistence type="evidence at transcript level"/>
<keyword id="KW-0256">Endoplasmic reticulum</keyword>
<keyword id="KW-0472">Membrane</keyword>
<keyword id="KW-1185">Reference proteome</keyword>
<keyword id="KW-0703">Sarcoplasmic reticulum</keyword>
<gene>
    <name type="primary">JSRP1</name>
</gene>
<reference key="1">
    <citation type="submission" date="2005-11" db="EMBL/GenBank/DDBJ databases">
        <authorList>
            <consortium name="NIH - Mammalian Gene Collection (MGC) project"/>
        </authorList>
    </citation>
    <scope>NUCLEOTIDE SEQUENCE [LARGE SCALE MRNA]</scope>
    <source>
        <strain>Crossbred X Angus</strain>
        <tissue>Liver</tissue>
    </source>
</reference>